<proteinExistence type="evidence at transcript level"/>
<dbReference type="EMBL" id="AF132477">
    <property type="protein sequence ID" value="AAD22109.1"/>
    <property type="molecule type" value="Genomic_DNA"/>
</dbReference>
<dbReference type="EMBL" id="AC002505">
    <property type="protein sequence ID" value="AAC14503.2"/>
    <property type="molecule type" value="Genomic_DNA"/>
</dbReference>
<dbReference type="EMBL" id="CP002685">
    <property type="protein sequence ID" value="AEC07856.1"/>
    <property type="molecule type" value="Genomic_DNA"/>
</dbReference>
<dbReference type="PIR" id="H84661">
    <property type="entry name" value="H84661"/>
</dbReference>
<dbReference type="PIR" id="T00988">
    <property type="entry name" value="T00988"/>
</dbReference>
<dbReference type="RefSeq" id="NP_001189610.1">
    <molecule id="O48722-1"/>
    <property type="nucleotide sequence ID" value="NM_001202681.2"/>
</dbReference>
<dbReference type="SMR" id="O48722"/>
<dbReference type="FunCoup" id="O48722">
    <property type="interactions" value="814"/>
</dbReference>
<dbReference type="STRING" id="3702.O48722"/>
<dbReference type="GlyGen" id="O48722">
    <property type="glycosylation" value="1 site"/>
</dbReference>
<dbReference type="iPTMnet" id="O48722"/>
<dbReference type="ProteomicsDB" id="230211">
    <molecule id="O48722-1"/>
</dbReference>
<dbReference type="EnsemblPlants" id="AT2G26550.2">
    <molecule id="O48722-1"/>
    <property type="protein sequence ID" value="AT2G26550.2"/>
    <property type="gene ID" value="AT2G26550"/>
</dbReference>
<dbReference type="GeneID" id="817196"/>
<dbReference type="Gramene" id="AT2G26550.2">
    <molecule id="O48722-1"/>
    <property type="protein sequence ID" value="AT2G26550.2"/>
    <property type="gene ID" value="AT2G26550"/>
</dbReference>
<dbReference type="KEGG" id="ath:AT2G26550"/>
<dbReference type="Araport" id="AT2G26550"/>
<dbReference type="TAIR" id="AT2G26550">
    <property type="gene designation" value="HO2"/>
</dbReference>
<dbReference type="HOGENOM" id="CLU_063325_0_0_1"/>
<dbReference type="InParanoid" id="O48722"/>
<dbReference type="PhylomeDB" id="O48722"/>
<dbReference type="PRO" id="PR:O48722"/>
<dbReference type="Proteomes" id="UP000006548">
    <property type="component" value="Chromosome 2"/>
</dbReference>
<dbReference type="ExpressionAtlas" id="O48722">
    <property type="expression patterns" value="baseline and differential"/>
</dbReference>
<dbReference type="GO" id="GO:0009507">
    <property type="term" value="C:chloroplast"/>
    <property type="evidence" value="ECO:0007669"/>
    <property type="project" value="UniProtKB-SubCell"/>
</dbReference>
<dbReference type="GO" id="GO:0004392">
    <property type="term" value="F:heme oxygenase (decyclizing) activity"/>
    <property type="evidence" value="ECO:0007669"/>
    <property type="project" value="InterPro"/>
</dbReference>
<dbReference type="GO" id="GO:0006788">
    <property type="term" value="P:heme oxidation"/>
    <property type="evidence" value="ECO:0007669"/>
    <property type="project" value="InterPro"/>
</dbReference>
<dbReference type="GO" id="GO:0015979">
    <property type="term" value="P:photosynthesis"/>
    <property type="evidence" value="ECO:0007669"/>
    <property type="project" value="UniProtKB-KW"/>
</dbReference>
<dbReference type="CDD" id="cd19165">
    <property type="entry name" value="HemeO"/>
    <property type="match status" value="1"/>
</dbReference>
<dbReference type="Gene3D" id="1.20.910.10">
    <property type="entry name" value="Heme oxygenase-like"/>
    <property type="match status" value="1"/>
</dbReference>
<dbReference type="InterPro" id="IPR002051">
    <property type="entry name" value="Haem_Oase"/>
</dbReference>
<dbReference type="InterPro" id="IPR016053">
    <property type="entry name" value="Haem_Oase-like"/>
</dbReference>
<dbReference type="InterPro" id="IPR016084">
    <property type="entry name" value="Haem_Oase-like_multi-hlx"/>
</dbReference>
<dbReference type="InterPro" id="IPR016951">
    <property type="entry name" value="Haem_Oase_decyc_pln"/>
</dbReference>
<dbReference type="PANTHER" id="PTHR35703">
    <property type="entry name" value="HEME OXYGENASE 1, CHLOROPLASTIC-RELATED"/>
    <property type="match status" value="1"/>
</dbReference>
<dbReference type="PANTHER" id="PTHR35703:SF1">
    <property type="entry name" value="INACTIVE HEME OXYGENASE 2, CHLOROPLASTIC-RELATED"/>
    <property type="match status" value="1"/>
</dbReference>
<dbReference type="Pfam" id="PF01126">
    <property type="entry name" value="Heme_oxygenase"/>
    <property type="match status" value="1"/>
</dbReference>
<dbReference type="PIRSF" id="PIRSF030219">
    <property type="entry name" value="Heme_Oase_decyc_pln"/>
    <property type="match status" value="1"/>
</dbReference>
<dbReference type="SUPFAM" id="SSF48613">
    <property type="entry name" value="Heme oxygenase-like"/>
    <property type="match status" value="1"/>
</dbReference>
<organism>
    <name type="scientific">Arabidopsis thaliana</name>
    <name type="common">Mouse-ear cress</name>
    <dbReference type="NCBI Taxonomy" id="3702"/>
    <lineage>
        <taxon>Eukaryota</taxon>
        <taxon>Viridiplantae</taxon>
        <taxon>Streptophyta</taxon>
        <taxon>Embryophyta</taxon>
        <taxon>Tracheophyta</taxon>
        <taxon>Spermatophyta</taxon>
        <taxon>Magnoliopsida</taxon>
        <taxon>eudicotyledons</taxon>
        <taxon>Gunneridae</taxon>
        <taxon>Pentapetalae</taxon>
        <taxon>rosids</taxon>
        <taxon>malvids</taxon>
        <taxon>Brassicales</taxon>
        <taxon>Brassicaceae</taxon>
        <taxon>Camelineae</taxon>
        <taxon>Arabidopsis</taxon>
    </lineage>
</organism>
<protein>
    <recommendedName>
        <fullName>Probable inactive heme oxygenase 2, chloroplastic</fullName>
        <shortName>AtHO2</shortName>
    </recommendedName>
</protein>
<sequence>MASLLRPTPLLSTPRKLTHSHLHTSISFPFQISTQRKPQKHLLNLCRSTPTPSQQKASQRKRTRYRKQYPGENIGITEEMRFVAMRLRNVNGKKLDLSEDKTDTEKEEEEEEEDDDDDDEVKEETWKPSKEGFLKYLVDSKLVFDTIERIVDESENVSYAYFRRTGLERCESIEKDLQWLREQDLVIPEPSNVGVSYAKYLEEQAGESAPLFLSHFYSIYFSHIAGGQVLVRQVSEKLLEGKELEFNRWEGDAQDLLKGVREKLNVLGEHWSRDEKNKCLKETAKAFKYMGQIVRLIIL</sequence>
<reference key="1">
    <citation type="journal article" date="1999" name="Proc. Natl. Acad. Sci. U.S.A.">
        <title>The Arabidopsis thaliana HY1 locus, required for phytochrome-chromophore biosynthesis, encodes a protein related to heme oxygenases.</title>
        <authorList>
            <person name="Davis S.J."/>
            <person name="Kurepa J."/>
            <person name="Vierstra R.D."/>
        </authorList>
    </citation>
    <scope>NUCLEOTIDE SEQUENCE [GENOMIC DNA]</scope>
</reference>
<reference key="2">
    <citation type="journal article" date="1999" name="Nature">
        <title>Sequence and analysis of chromosome 2 of the plant Arabidopsis thaliana.</title>
        <authorList>
            <person name="Lin X."/>
            <person name="Kaul S."/>
            <person name="Rounsley S.D."/>
            <person name="Shea T.P."/>
            <person name="Benito M.-I."/>
            <person name="Town C.D."/>
            <person name="Fujii C.Y."/>
            <person name="Mason T.M."/>
            <person name="Bowman C.L."/>
            <person name="Barnstead M.E."/>
            <person name="Feldblyum T.V."/>
            <person name="Buell C.R."/>
            <person name="Ketchum K.A."/>
            <person name="Lee J.J."/>
            <person name="Ronning C.M."/>
            <person name="Koo H.L."/>
            <person name="Moffat K.S."/>
            <person name="Cronin L.A."/>
            <person name="Shen M."/>
            <person name="Pai G."/>
            <person name="Van Aken S."/>
            <person name="Umayam L."/>
            <person name="Tallon L.J."/>
            <person name="Gill J.E."/>
            <person name="Adams M.D."/>
            <person name="Carrera A.J."/>
            <person name="Creasy T.H."/>
            <person name="Goodman H.M."/>
            <person name="Somerville C.R."/>
            <person name="Copenhaver G.P."/>
            <person name="Preuss D."/>
            <person name="Nierman W.C."/>
            <person name="White O."/>
            <person name="Eisen J.A."/>
            <person name="Salzberg S.L."/>
            <person name="Fraser C.M."/>
            <person name="Venter J.C."/>
        </authorList>
    </citation>
    <scope>NUCLEOTIDE SEQUENCE [LARGE SCALE GENOMIC DNA]</scope>
    <source>
        <strain>cv. Columbia</strain>
    </source>
</reference>
<reference key="3">
    <citation type="journal article" date="2017" name="Plant J.">
        <title>Araport11: a complete reannotation of the Arabidopsis thaliana reference genome.</title>
        <authorList>
            <person name="Cheng C.Y."/>
            <person name="Krishnakumar V."/>
            <person name="Chan A.P."/>
            <person name="Thibaud-Nissen F."/>
            <person name="Schobel S."/>
            <person name="Town C.D."/>
        </authorList>
    </citation>
    <scope>GENOME REANNOTATION</scope>
    <source>
        <strain>cv. Columbia</strain>
    </source>
</reference>
<reference key="4">
    <citation type="journal article" date="2006" name="Plant Physiol.">
        <title>Multiple heme oxygenase family members contribute to the biosynthesis of the phytochrome chromophore in Arabidopsis.</title>
        <authorList>
            <person name="Emborg T.J."/>
            <person name="Walker J.M."/>
            <person name="Noh B."/>
            <person name="Vierstra R.D."/>
        </authorList>
    </citation>
    <scope>FUNCTION</scope>
    <scope>TISSUE SPECIFICITY</scope>
    <scope>DISRUPTION PHENOTYPE</scope>
</reference>
<reference key="5">
    <citation type="journal article" date="2010" name="Biochem. J.">
        <title>Characterization of the haem oxygenase protein family in Arabidopsis thaliana reveals a diversity of functions.</title>
        <authorList>
            <person name="Gisk B."/>
            <person name="Yasui Y."/>
            <person name="Kohchi T."/>
            <person name="Frankenberg-Dinkel N."/>
        </authorList>
    </citation>
    <scope>FUNCTION</scope>
    <scope>SUBCELLULAR LOCATION</scope>
</reference>
<feature type="transit peptide" description="Chloroplast" evidence="1">
    <location>
        <begin position="1"/>
        <end position="83"/>
    </location>
</feature>
<feature type="chain" id="PRO_0000412186" description="Probable inactive heme oxygenase 2, chloroplastic">
    <location>
        <begin position="84"/>
        <end position="299"/>
    </location>
</feature>
<feature type="region of interest" description="Disordered" evidence="2">
    <location>
        <begin position="1"/>
        <end position="20"/>
    </location>
</feature>
<feature type="region of interest" description="Disordered" evidence="2">
    <location>
        <begin position="45"/>
        <end position="70"/>
    </location>
</feature>
<feature type="region of interest" description="Disordered" evidence="2">
    <location>
        <begin position="96"/>
        <end position="126"/>
    </location>
</feature>
<feature type="compositionally biased region" description="Low complexity" evidence="2">
    <location>
        <begin position="1"/>
        <end position="15"/>
    </location>
</feature>
<feature type="compositionally biased region" description="Polar residues" evidence="2">
    <location>
        <begin position="46"/>
        <end position="57"/>
    </location>
</feature>
<feature type="compositionally biased region" description="Basic residues" evidence="2">
    <location>
        <begin position="58"/>
        <end position="67"/>
    </location>
</feature>
<feature type="compositionally biased region" description="Acidic residues" evidence="2">
    <location>
        <begin position="105"/>
        <end position="122"/>
    </location>
</feature>
<gene>
    <name type="primary">HO2</name>
    <name type="ordered locus">At2g26550</name>
    <name type="ORF">T9J22.22</name>
</gene>
<accession>O48722</accession>
<comment type="function">
    <text evidence="3 4">Probable inactive heme oxygenase. Binds protoporphyrin IX, a precursor for both heme and chlorophyll biosynthesis. Plays a minor role in phytochrome assembly and photomorphogenesis.</text>
</comment>
<comment type="subcellular location">
    <subcellularLocation>
        <location evidence="4">Plastid</location>
        <location evidence="4">Chloroplast</location>
    </subcellularLocation>
</comment>
<comment type="alternative products">
    <event type="alternative splicing"/>
    <isoform>
        <id>O48722-1</id>
        <name>1</name>
        <sequence type="displayed"/>
    </isoform>
    <text>A number of isoforms are produced. According to EST sequences.</text>
</comment>
<comment type="tissue specificity">
    <text evidence="3">Widely expressed at low levels.</text>
</comment>
<comment type="disruption phenotype">
    <text evidence="3">Slight reduction in plant size and chlorophyll content, and early flowering.</text>
</comment>
<comment type="similarity">
    <text evidence="5">Belongs to the heme oxygenase family.</text>
</comment>
<comment type="caution">
    <text evidence="5">Lacks the conserved His residue involved in heme iron binding and essential for heme oxygenase activity. Its enzyme activity is therefore unsure.</text>
</comment>
<evidence type="ECO:0000255" key="1"/>
<evidence type="ECO:0000256" key="2">
    <source>
        <dbReference type="SAM" id="MobiDB-lite"/>
    </source>
</evidence>
<evidence type="ECO:0000269" key="3">
    <source>
    </source>
</evidence>
<evidence type="ECO:0000269" key="4">
    <source>
    </source>
</evidence>
<evidence type="ECO:0000305" key="5"/>
<name>HMOX2_ARATH</name>
<keyword id="KW-0025">Alternative splicing</keyword>
<keyword id="KW-0150">Chloroplast</keyword>
<keyword id="KW-0602">Photosynthesis</keyword>
<keyword id="KW-0934">Plastid</keyword>
<keyword id="KW-1185">Reference proteome</keyword>
<keyword id="KW-0809">Transit peptide</keyword>